<comment type="catalytic activity">
    <reaction evidence="1">
        <text>5-(methylsulfanyl)-D-ribulose 1-phosphate = 5-methylsulfanyl-2,3-dioxopentyl phosphate + H2O</text>
        <dbReference type="Rhea" id="RHEA:15549"/>
        <dbReference type="ChEBI" id="CHEBI:15377"/>
        <dbReference type="ChEBI" id="CHEBI:58548"/>
        <dbReference type="ChEBI" id="CHEBI:58828"/>
        <dbReference type="EC" id="4.2.1.109"/>
    </reaction>
</comment>
<comment type="catalytic activity">
    <reaction evidence="1">
        <text>5-methylsulfanyl-2,3-dioxopentyl phosphate + H2O = 1,2-dihydroxy-5-(methylsulfanyl)pent-1-en-3-one + phosphate</text>
        <dbReference type="Rhea" id="RHEA:21700"/>
        <dbReference type="ChEBI" id="CHEBI:15377"/>
        <dbReference type="ChEBI" id="CHEBI:43474"/>
        <dbReference type="ChEBI" id="CHEBI:49252"/>
        <dbReference type="ChEBI" id="CHEBI:58828"/>
        <dbReference type="EC" id="3.1.3.77"/>
    </reaction>
</comment>
<comment type="cofactor">
    <cofactor evidence="1">
        <name>Zn(2+)</name>
        <dbReference type="ChEBI" id="CHEBI:29105"/>
    </cofactor>
    <text evidence="1">Binds 1 zinc ion per subunit.</text>
</comment>
<comment type="cofactor">
    <cofactor evidence="1">
        <name>Mg(2+)</name>
        <dbReference type="ChEBI" id="CHEBI:18420"/>
    </cofactor>
    <text evidence="1">Binds 1 Mg(2+) ion per subunit.</text>
</comment>
<comment type="pathway">
    <text evidence="1">Amino-acid biosynthesis; L-methionine biosynthesis via salvage pathway; L-methionine from S-methyl-5-thio-alpha-D-ribose 1-phosphate: step 2/6.</text>
</comment>
<comment type="pathway">
    <text evidence="1">Amino-acid biosynthesis; L-methionine biosynthesis via salvage pathway; L-methionine from S-methyl-5-thio-alpha-D-ribose 1-phosphate: step 3/6.</text>
</comment>
<comment type="pathway">
    <text evidence="1">Amino-acid biosynthesis; L-methionine biosynthesis via salvage pathway; L-methionine from S-methyl-5-thio-alpha-D-ribose 1-phosphate: step 4/6.</text>
</comment>
<comment type="similarity">
    <text evidence="1">In the N-terminal section; belongs to the aldolase class II family. MtnB subfamily.</text>
</comment>
<comment type="similarity">
    <text evidence="1">In the C-terminal section; belongs to the HAD-like hydrolase superfamily. MasA/MtnC family.</text>
</comment>
<reference key="1">
    <citation type="journal article" date="2007" name="Nature">
        <title>The grapevine genome sequence suggests ancestral hexaploidization in major angiosperm phyla.</title>
        <authorList>
            <person name="Jaillon O."/>
            <person name="Aury J.-M."/>
            <person name="Noel B."/>
            <person name="Policriti A."/>
            <person name="Clepet C."/>
            <person name="Casagrande A."/>
            <person name="Choisne N."/>
            <person name="Aubourg S."/>
            <person name="Vitulo N."/>
            <person name="Jubin C."/>
            <person name="Vezzi A."/>
            <person name="Legeai F."/>
            <person name="Hugueney P."/>
            <person name="Dasilva C."/>
            <person name="Horner D."/>
            <person name="Mica E."/>
            <person name="Jublot D."/>
            <person name="Poulain J."/>
            <person name="Bruyere C."/>
            <person name="Billault A."/>
            <person name="Segurens B."/>
            <person name="Gouyvenoux M."/>
            <person name="Ugarte E."/>
            <person name="Cattonaro F."/>
            <person name="Anthouard V."/>
            <person name="Vico V."/>
            <person name="Del Fabbro C."/>
            <person name="Alaux M."/>
            <person name="Di Gaspero G."/>
            <person name="Dumas V."/>
            <person name="Felice N."/>
            <person name="Paillard S."/>
            <person name="Juman I."/>
            <person name="Moroldo M."/>
            <person name="Scalabrin S."/>
            <person name="Canaguier A."/>
            <person name="Le Clainche I."/>
            <person name="Malacrida G."/>
            <person name="Durand E."/>
            <person name="Pesole G."/>
            <person name="Laucou V."/>
            <person name="Chatelet P."/>
            <person name="Merdinoglu D."/>
            <person name="Delledonne M."/>
            <person name="Pezzotti M."/>
            <person name="Lecharny A."/>
            <person name="Scarpelli C."/>
            <person name="Artiguenave F."/>
            <person name="Pe M.E."/>
            <person name="Valle G."/>
            <person name="Morgante M."/>
            <person name="Caboche M."/>
            <person name="Adam-Blondon A.-F."/>
            <person name="Weissenbach J."/>
            <person name="Quetier F."/>
            <person name="Wincker P."/>
        </authorList>
    </citation>
    <scope>NUCLEOTIDE SEQUENCE [LARGE SCALE GENOMIC DNA]</scope>
    <source>
        <strain>cv. Pinot noir / PN40024</strain>
    </source>
</reference>
<proteinExistence type="inferred from homology"/>
<organism>
    <name type="scientific">Vitis vinifera</name>
    <name type="common">Grape</name>
    <dbReference type="NCBI Taxonomy" id="29760"/>
    <lineage>
        <taxon>Eukaryota</taxon>
        <taxon>Viridiplantae</taxon>
        <taxon>Streptophyta</taxon>
        <taxon>Embryophyta</taxon>
        <taxon>Tracheophyta</taxon>
        <taxon>Spermatophyta</taxon>
        <taxon>Magnoliopsida</taxon>
        <taxon>eudicotyledons</taxon>
        <taxon>Gunneridae</taxon>
        <taxon>Pentapetalae</taxon>
        <taxon>rosids</taxon>
        <taxon>Vitales</taxon>
        <taxon>Vitaceae</taxon>
        <taxon>Viteae</taxon>
        <taxon>Vitis</taxon>
    </lineage>
</organism>
<accession>E0CSI1</accession>
<accession>F6H233</accession>
<gene>
    <name type="ordered locus">VIT_19s0014g02480</name>
</gene>
<protein>
    <recommendedName>
        <fullName evidence="1">Probable bifunctional methylthioribulose-1-phosphate dehydratase/enolase-phosphatase E1 1</fullName>
    </recommendedName>
    <domain>
        <recommendedName>
            <fullName evidence="1">Methylthioribulose-1-phosphate dehydratase</fullName>
            <shortName evidence="1">MTRu-1-P dehydratase</shortName>
            <ecNumber evidence="1">4.2.1.109</ecNumber>
        </recommendedName>
    </domain>
    <domain>
        <recommendedName>
            <fullName evidence="1">Enolase-phosphatase E1</fullName>
            <ecNumber evidence="1">3.1.3.77</ecNumber>
        </recommendedName>
        <alternativeName>
            <fullName evidence="1">2,3-diketo-5-methylthio-1-phosphopentane phosphatase</fullName>
        </alternativeName>
    </domain>
</protein>
<keyword id="KW-0028">Amino-acid biosynthesis</keyword>
<keyword id="KW-0378">Hydrolase</keyword>
<keyword id="KW-0456">Lyase</keyword>
<keyword id="KW-0460">Magnesium</keyword>
<keyword id="KW-0479">Metal-binding</keyword>
<keyword id="KW-0486">Methionine biosynthesis</keyword>
<keyword id="KW-0511">Multifunctional enzyme</keyword>
<keyword id="KW-1185">Reference proteome</keyword>
<keyword id="KW-0862">Zinc</keyword>
<feature type="chain" id="PRO_0000403960" description="Probable bifunctional methylthioribulose-1-phosphate dehydratase/enolase-phosphatase E1 1">
    <location>
        <begin position="1"/>
        <end position="517"/>
    </location>
</feature>
<feature type="region of interest" description="Methylthioribulose-1-phosphate dehydratase" evidence="1">
    <location>
        <begin position="1"/>
        <end position="240"/>
    </location>
</feature>
<feature type="region of interest" description="Enolase-phosphatase E1" evidence="1">
    <location>
        <begin position="278"/>
        <end position="517"/>
    </location>
</feature>
<feature type="active site" description="Proton donor/acceptor; for methylthioribulose-1-phosphate dehydratase activity" evidence="1">
    <location>
        <position position="155"/>
    </location>
</feature>
<feature type="binding site" evidence="1">
    <location>
        <position position="112"/>
    </location>
    <ligand>
        <name>substrate</name>
        <label>1</label>
        <note>for methylthioribulose-1-phosphate dehydratase activity</note>
    </ligand>
</feature>
<feature type="binding site" evidence="1">
    <location>
        <position position="130"/>
    </location>
    <ligand>
        <name>Zn(2+)</name>
        <dbReference type="ChEBI" id="CHEBI:29105"/>
    </ligand>
</feature>
<feature type="binding site" evidence="1">
    <location>
        <position position="132"/>
    </location>
    <ligand>
        <name>Zn(2+)</name>
        <dbReference type="ChEBI" id="CHEBI:29105"/>
    </ligand>
</feature>
<feature type="binding site" evidence="1">
    <location>
        <position position="205"/>
    </location>
    <ligand>
        <name>Zn(2+)</name>
        <dbReference type="ChEBI" id="CHEBI:29105"/>
    </ligand>
</feature>
<feature type="binding site" evidence="1">
    <location>
        <position position="281"/>
    </location>
    <ligand>
        <name>Mg(2+)</name>
        <dbReference type="ChEBI" id="CHEBI:18420"/>
    </ligand>
</feature>
<feature type="binding site" evidence="1">
    <location>
        <position position="283"/>
    </location>
    <ligand>
        <name>Mg(2+)</name>
        <dbReference type="ChEBI" id="CHEBI:18420"/>
    </ligand>
</feature>
<feature type="binding site" evidence="1">
    <location>
        <begin position="416"/>
        <end position="417"/>
    </location>
    <ligand>
        <name>substrate</name>
        <label>2</label>
        <note>for enolase-phosphatase activity</note>
    </ligand>
</feature>
<feature type="binding site" evidence="1">
    <location>
        <position position="450"/>
    </location>
    <ligand>
        <name>substrate</name>
        <label>2</label>
        <note>for enolase-phosphatase activity</note>
    </ligand>
</feature>
<feature type="binding site" evidence="1">
    <location>
        <position position="476"/>
    </location>
    <ligand>
        <name>Mg(2+)</name>
        <dbReference type="ChEBI" id="CHEBI:18420"/>
    </ligand>
</feature>
<sequence>MAAAALNGLKMAATSQAYLESMPVNDTRKLLSDLCRHFYGLGWVSGTGGSITIKVHDESIPKPQQLIVMSPSGVQKERMVPEDMYVLSPSGCFLSSPSPKPYPNKPPKCSDCAPLFMKAYLMRNAGAVIHSHGMESCIVTMIDPLSKEFRITHMEMIKGIQGHGYYDELVVPIIENTAHERELTDALAEAIEAYPKTTAVLVRNHGIYIWGDSWIHAKTQAECYHYLFDAAIKLYQLGLDWSTPDHGPIKKYGGKTNMSVKAGTVNSNHETEPSRRCIVLDIEGTTTPISFVTDVLFPFARNNVSRHLAATYETDETQDDIKLLRTQVQSDLEQGIVGAVPIPPDDAGKEEVIAALVANVEAMIKADRKITALKQLQGHIWRTGFQNNELEGVVFEDVPEALQKWHASGIKVYIYSSGSRLAQRLLFGYTNYGDLRKYLCGFFDTTVGNKRETKSYVEITESVGVDKPSEILFVTDVYQEAVAAKAAGLEVIISIRPGNGPLPDNHGFKTITSFSDI</sequence>
<name>MTBC1_VITVI</name>
<evidence type="ECO:0000255" key="1">
    <source>
        <dbReference type="HAMAP-Rule" id="MF_03118"/>
    </source>
</evidence>
<dbReference type="EC" id="4.2.1.109" evidence="1"/>
<dbReference type="EC" id="3.1.3.77" evidence="1"/>
<dbReference type="EMBL" id="FN595229">
    <property type="protein sequence ID" value="CCB46329.1"/>
    <property type="molecule type" value="Genomic_DNA"/>
</dbReference>
<dbReference type="EMBL" id="FN597046">
    <property type="status" value="NOT_ANNOTATED_CDS"/>
    <property type="molecule type" value="Genomic_DNA"/>
</dbReference>
<dbReference type="SMR" id="E0CSI1"/>
<dbReference type="FunCoup" id="E0CSI1">
    <property type="interactions" value="1395"/>
</dbReference>
<dbReference type="STRING" id="29760.E0CSI1"/>
<dbReference type="PaxDb" id="29760-VIT_19s0014g02480.t01"/>
<dbReference type="EnsemblPlants" id="Vitvi19g00208_t001">
    <property type="protein sequence ID" value="Vitvi19g00208_P001"/>
    <property type="gene ID" value="Vitvi19g00208"/>
</dbReference>
<dbReference type="Gramene" id="Vitvi19g00208_t001">
    <property type="protein sequence ID" value="Vitvi19g00208_P001"/>
    <property type="gene ID" value="Vitvi19g00208"/>
</dbReference>
<dbReference type="eggNOG" id="KOG2630">
    <property type="taxonomic scope" value="Eukaryota"/>
</dbReference>
<dbReference type="eggNOG" id="KOG2631">
    <property type="taxonomic scope" value="Eukaryota"/>
</dbReference>
<dbReference type="HOGENOM" id="CLU_023273_3_1_1"/>
<dbReference type="InParanoid" id="E0CSI1"/>
<dbReference type="OrthoDB" id="191080at2759"/>
<dbReference type="UniPathway" id="UPA00904">
    <property type="reaction ID" value="UER00875"/>
</dbReference>
<dbReference type="UniPathway" id="UPA00904">
    <property type="reaction ID" value="UER00876"/>
</dbReference>
<dbReference type="UniPathway" id="UPA00904">
    <property type="reaction ID" value="UER00877"/>
</dbReference>
<dbReference type="Proteomes" id="UP000009183">
    <property type="component" value="Chromosome 19"/>
</dbReference>
<dbReference type="ExpressionAtlas" id="E0CSI1">
    <property type="expression patterns" value="baseline and differential"/>
</dbReference>
<dbReference type="GO" id="GO:0005737">
    <property type="term" value="C:cytoplasm"/>
    <property type="evidence" value="ECO:0000318"/>
    <property type="project" value="GO_Central"/>
</dbReference>
<dbReference type="GO" id="GO:0043874">
    <property type="term" value="F:acireductone synthase activity"/>
    <property type="evidence" value="ECO:0007669"/>
    <property type="project" value="UniProtKB-EC"/>
</dbReference>
<dbReference type="GO" id="GO:0000287">
    <property type="term" value="F:magnesium ion binding"/>
    <property type="evidence" value="ECO:0007669"/>
    <property type="project" value="UniProtKB-UniRule"/>
</dbReference>
<dbReference type="GO" id="GO:0046570">
    <property type="term" value="F:methylthioribulose 1-phosphate dehydratase activity"/>
    <property type="evidence" value="ECO:0000318"/>
    <property type="project" value="GO_Central"/>
</dbReference>
<dbReference type="GO" id="GO:0008270">
    <property type="term" value="F:zinc ion binding"/>
    <property type="evidence" value="ECO:0007669"/>
    <property type="project" value="UniProtKB-UniRule"/>
</dbReference>
<dbReference type="GO" id="GO:0019509">
    <property type="term" value="P:L-methionine salvage from methylthioadenosine"/>
    <property type="evidence" value="ECO:0000318"/>
    <property type="project" value="GO_Central"/>
</dbReference>
<dbReference type="CDD" id="cd01629">
    <property type="entry name" value="HAD_EP"/>
    <property type="match status" value="1"/>
</dbReference>
<dbReference type="FunFam" id="1.10.720.60:FF:000001">
    <property type="entry name" value="Probable bifunctional methylthioribulose-1-phosphate dehydratase/enolase-phosphatase E1"/>
    <property type="match status" value="1"/>
</dbReference>
<dbReference type="FunFam" id="3.40.225.10:FF:000010">
    <property type="entry name" value="Probable bifunctional methylthioribulose-1-phosphate dehydratase/enolase-phosphatase E1"/>
    <property type="match status" value="1"/>
</dbReference>
<dbReference type="FunFam" id="3.40.50.1000:FF:000088">
    <property type="entry name" value="Probable bifunctional methylthioribulose-1-phosphate dehydratase/enolase-phosphatase E1"/>
    <property type="match status" value="1"/>
</dbReference>
<dbReference type="Gene3D" id="1.10.720.60">
    <property type="match status" value="1"/>
</dbReference>
<dbReference type="Gene3D" id="3.40.225.10">
    <property type="entry name" value="Class II aldolase/adducin N-terminal domain"/>
    <property type="match status" value="1"/>
</dbReference>
<dbReference type="Gene3D" id="3.40.50.1000">
    <property type="entry name" value="HAD superfamily/HAD-like"/>
    <property type="match status" value="1"/>
</dbReference>
<dbReference type="HAMAP" id="MF_03116">
    <property type="entry name" value="Salvage_MtnB_euk"/>
    <property type="match status" value="1"/>
</dbReference>
<dbReference type="HAMAP" id="MF_03118">
    <property type="entry name" value="Salvage_MtnBC"/>
    <property type="match status" value="1"/>
</dbReference>
<dbReference type="HAMAP" id="MF_01681">
    <property type="entry name" value="Salvage_MtnC"/>
    <property type="match status" value="1"/>
</dbReference>
<dbReference type="HAMAP" id="MF_03117">
    <property type="entry name" value="Salvage_MtnC_euk"/>
    <property type="match status" value="1"/>
</dbReference>
<dbReference type="InterPro" id="IPR001303">
    <property type="entry name" value="Aldolase_II/adducin_N"/>
</dbReference>
<dbReference type="InterPro" id="IPR036409">
    <property type="entry name" value="Aldolase_II/adducin_N_sf"/>
</dbReference>
<dbReference type="InterPro" id="IPR023943">
    <property type="entry name" value="Enolase-ppase_E1"/>
</dbReference>
<dbReference type="InterPro" id="IPR027511">
    <property type="entry name" value="ENOPH1_eukaryotes"/>
</dbReference>
<dbReference type="InterPro" id="IPR036412">
    <property type="entry name" value="HAD-like_sf"/>
</dbReference>
<dbReference type="InterPro" id="IPR006439">
    <property type="entry name" value="HAD-SF_hydro_IA"/>
</dbReference>
<dbReference type="InterPro" id="IPR023214">
    <property type="entry name" value="HAD_sf"/>
</dbReference>
<dbReference type="InterPro" id="IPR017714">
    <property type="entry name" value="MethylthioRu-1-P_deHdtase_MtnB"/>
</dbReference>
<dbReference type="InterPro" id="IPR027505">
    <property type="entry name" value="MtnB_viridiplantae"/>
</dbReference>
<dbReference type="InterPro" id="IPR027514">
    <property type="entry name" value="Salvage_MtnB_euk"/>
</dbReference>
<dbReference type="NCBIfam" id="TIGR01691">
    <property type="entry name" value="enolase-ppase"/>
    <property type="match status" value="1"/>
</dbReference>
<dbReference type="NCBIfam" id="TIGR01549">
    <property type="entry name" value="HAD-SF-IA-v1"/>
    <property type="match status" value="1"/>
</dbReference>
<dbReference type="NCBIfam" id="TIGR03328">
    <property type="entry name" value="salvage_mtnB"/>
    <property type="match status" value="1"/>
</dbReference>
<dbReference type="PANTHER" id="PTHR20371">
    <property type="entry name" value="ENOLASE-PHOSPHATASE E1"/>
    <property type="match status" value="1"/>
</dbReference>
<dbReference type="PANTHER" id="PTHR20371:SF1">
    <property type="entry name" value="ENOLASE-PHOSPHATASE E1"/>
    <property type="match status" value="1"/>
</dbReference>
<dbReference type="Pfam" id="PF00596">
    <property type="entry name" value="Aldolase_II"/>
    <property type="match status" value="1"/>
</dbReference>
<dbReference type="Pfam" id="PF00702">
    <property type="entry name" value="Hydrolase"/>
    <property type="match status" value="1"/>
</dbReference>
<dbReference type="SFLD" id="SFLDF00044">
    <property type="entry name" value="enolase-phosphatase"/>
    <property type="match status" value="1"/>
</dbReference>
<dbReference type="SFLD" id="SFLDS00003">
    <property type="entry name" value="Haloacid_Dehalogenase"/>
    <property type="match status" value="1"/>
</dbReference>
<dbReference type="SMART" id="SM01007">
    <property type="entry name" value="Aldolase_II"/>
    <property type="match status" value="1"/>
</dbReference>
<dbReference type="SUPFAM" id="SSF53639">
    <property type="entry name" value="AraD/HMP-PK domain-like"/>
    <property type="match status" value="1"/>
</dbReference>
<dbReference type="SUPFAM" id="SSF56784">
    <property type="entry name" value="HAD-like"/>
    <property type="match status" value="1"/>
</dbReference>